<comment type="catalytic activity">
    <reaction evidence="1">
        <text>1-(5-phospho-beta-D-ribosyl)-5-[(5-phospho-beta-D-ribosylamino)methylideneamino]imidazole-4-carboxamide = 5-[(5-phospho-1-deoxy-D-ribulos-1-ylimino)methylamino]-1-(5-phospho-beta-D-ribosyl)imidazole-4-carboxamide</text>
        <dbReference type="Rhea" id="RHEA:15469"/>
        <dbReference type="ChEBI" id="CHEBI:58435"/>
        <dbReference type="ChEBI" id="CHEBI:58525"/>
        <dbReference type="EC" id="5.3.1.16"/>
    </reaction>
</comment>
<comment type="pathway">
    <text evidence="1">Amino-acid biosynthesis; L-histidine biosynthesis; L-histidine from 5-phospho-alpha-D-ribose 1-diphosphate: step 4/9.</text>
</comment>
<comment type="subcellular location">
    <subcellularLocation>
        <location evidence="1">Cytoplasm</location>
    </subcellularLocation>
</comment>
<comment type="similarity">
    <text evidence="1">Belongs to the HisA/HisF family.</text>
</comment>
<protein>
    <recommendedName>
        <fullName evidence="1">1-(5-phosphoribosyl)-5-[(5-phosphoribosylamino)methylideneamino] imidazole-4-carboxamide isomerase</fullName>
        <ecNumber evidence="1">5.3.1.16</ecNumber>
    </recommendedName>
    <alternativeName>
        <fullName evidence="1">Phosphoribosylformimino-5-aminoimidazole carboxamide ribotide isomerase</fullName>
    </alternativeName>
</protein>
<feature type="chain" id="PRO_1000213234" description="1-(5-phosphoribosyl)-5-[(5-phosphoribosylamino)methylideneamino] imidazole-4-carboxamide isomerase">
    <location>
        <begin position="1"/>
        <end position="244"/>
    </location>
</feature>
<feature type="active site" description="Proton acceptor" evidence="1">
    <location>
        <position position="10"/>
    </location>
</feature>
<feature type="active site" description="Proton donor" evidence="1">
    <location>
        <position position="129"/>
    </location>
</feature>
<evidence type="ECO:0000255" key="1">
    <source>
        <dbReference type="HAMAP-Rule" id="MF_01014"/>
    </source>
</evidence>
<accession>C1A0L8</accession>
<sequence>MSLVLLPAVDVVNGEAVRLVQGEAGSETGYGSPRDAALAWQNDGAEWVHLVDLDAAFGRGSNSELLAGVIGDLTVKVELSGGIRDDASLEAALATGCARVNLGTAAIEDPEWCARALAKYGDKIAVGLDVRLVDGQYRTRGRGWVTDGGDLWETLARLDRDGCTRYVVTDVSKDGTLTGPNLELLSQVCAVTDAHVVASGGVSTIEDLLAISSLVDQGVEGAIVGKALYAGRFTLPEALAAVSG</sequence>
<name>HIS4_RHOE4</name>
<reference key="1">
    <citation type="submission" date="2005-03" db="EMBL/GenBank/DDBJ databases">
        <title>Comparison of the complete genome sequences of Rhodococcus erythropolis PR4 and Rhodococcus opacus B4.</title>
        <authorList>
            <person name="Takarada H."/>
            <person name="Sekine M."/>
            <person name="Hosoyama A."/>
            <person name="Yamada R."/>
            <person name="Fujisawa T."/>
            <person name="Omata S."/>
            <person name="Shimizu A."/>
            <person name="Tsukatani N."/>
            <person name="Tanikawa S."/>
            <person name="Fujita N."/>
            <person name="Harayama S."/>
        </authorList>
    </citation>
    <scope>NUCLEOTIDE SEQUENCE [LARGE SCALE GENOMIC DNA]</scope>
    <source>
        <strain>PR4 / NBRC 100887</strain>
    </source>
</reference>
<gene>
    <name evidence="1" type="primary">hisA</name>
    <name type="ordered locus">RER_34450</name>
</gene>
<dbReference type="EC" id="5.3.1.16" evidence="1"/>
<dbReference type="EMBL" id="AP008957">
    <property type="protein sequence ID" value="BAH34153.1"/>
    <property type="molecule type" value="Genomic_DNA"/>
</dbReference>
<dbReference type="SMR" id="C1A0L8"/>
<dbReference type="KEGG" id="rer:RER_34450"/>
<dbReference type="eggNOG" id="COG0106">
    <property type="taxonomic scope" value="Bacteria"/>
</dbReference>
<dbReference type="HOGENOM" id="CLU_048577_1_1_11"/>
<dbReference type="UniPathway" id="UPA00031">
    <property type="reaction ID" value="UER00009"/>
</dbReference>
<dbReference type="Proteomes" id="UP000002204">
    <property type="component" value="Chromosome"/>
</dbReference>
<dbReference type="GO" id="GO:0005737">
    <property type="term" value="C:cytoplasm"/>
    <property type="evidence" value="ECO:0007669"/>
    <property type="project" value="UniProtKB-SubCell"/>
</dbReference>
<dbReference type="GO" id="GO:0003949">
    <property type="term" value="F:1-(5-phosphoribosyl)-5-[(5-phosphoribosylamino)methylideneamino]imidazole-4-carboxamide isomerase activity"/>
    <property type="evidence" value="ECO:0007669"/>
    <property type="project" value="UniProtKB-UniRule"/>
</dbReference>
<dbReference type="GO" id="GO:0004640">
    <property type="term" value="F:phosphoribosylanthranilate isomerase activity"/>
    <property type="evidence" value="ECO:0007669"/>
    <property type="project" value="InterPro"/>
</dbReference>
<dbReference type="GO" id="GO:0000105">
    <property type="term" value="P:L-histidine biosynthetic process"/>
    <property type="evidence" value="ECO:0007669"/>
    <property type="project" value="UniProtKB-UniRule"/>
</dbReference>
<dbReference type="GO" id="GO:0000162">
    <property type="term" value="P:L-tryptophan biosynthetic process"/>
    <property type="evidence" value="ECO:0007669"/>
    <property type="project" value="InterPro"/>
</dbReference>
<dbReference type="CDD" id="cd04732">
    <property type="entry name" value="HisA"/>
    <property type="match status" value="1"/>
</dbReference>
<dbReference type="FunFam" id="3.20.20.70:FF:000009">
    <property type="entry name" value="1-(5-phosphoribosyl)-5-[(5-phosphoribosylamino)methylideneamino] imidazole-4-carboxamide isomerase"/>
    <property type="match status" value="1"/>
</dbReference>
<dbReference type="Gene3D" id="3.20.20.70">
    <property type="entry name" value="Aldolase class I"/>
    <property type="match status" value="1"/>
</dbReference>
<dbReference type="HAMAP" id="MF_01014">
    <property type="entry name" value="HisA"/>
    <property type="match status" value="1"/>
</dbReference>
<dbReference type="InterPro" id="IPR013785">
    <property type="entry name" value="Aldolase_TIM"/>
</dbReference>
<dbReference type="InterPro" id="IPR006062">
    <property type="entry name" value="His_biosynth"/>
</dbReference>
<dbReference type="InterPro" id="IPR010188">
    <property type="entry name" value="HisA/PriA_Actinobacteria"/>
</dbReference>
<dbReference type="InterPro" id="IPR044524">
    <property type="entry name" value="Isoase_HisA-like"/>
</dbReference>
<dbReference type="InterPro" id="IPR023016">
    <property type="entry name" value="Isoase_HisA-like_bact"/>
</dbReference>
<dbReference type="InterPro" id="IPR011060">
    <property type="entry name" value="RibuloseP-bd_barrel"/>
</dbReference>
<dbReference type="NCBIfam" id="TIGR01919">
    <property type="entry name" value="hisA-trpF"/>
    <property type="match status" value="1"/>
</dbReference>
<dbReference type="PANTHER" id="PTHR43090">
    <property type="entry name" value="1-(5-PHOSPHORIBOSYL)-5-[(5-PHOSPHORIBOSYLAMINO)METHYLIDENEAMINO] IMIDAZOLE-4-CARBOXAMIDE ISOMERASE"/>
    <property type="match status" value="1"/>
</dbReference>
<dbReference type="PANTHER" id="PTHR43090:SF2">
    <property type="entry name" value="1-(5-PHOSPHORIBOSYL)-5-[(5-PHOSPHORIBOSYLAMINO)METHYLIDENEAMINO] IMIDAZOLE-4-CARBOXAMIDE ISOMERASE"/>
    <property type="match status" value="1"/>
</dbReference>
<dbReference type="Pfam" id="PF00977">
    <property type="entry name" value="His_biosynth"/>
    <property type="match status" value="1"/>
</dbReference>
<dbReference type="SUPFAM" id="SSF51366">
    <property type="entry name" value="Ribulose-phoshate binding barrel"/>
    <property type="match status" value="1"/>
</dbReference>
<organism>
    <name type="scientific">Rhodococcus erythropolis (strain PR4 / NBRC 100887)</name>
    <dbReference type="NCBI Taxonomy" id="234621"/>
    <lineage>
        <taxon>Bacteria</taxon>
        <taxon>Bacillati</taxon>
        <taxon>Actinomycetota</taxon>
        <taxon>Actinomycetes</taxon>
        <taxon>Mycobacteriales</taxon>
        <taxon>Nocardiaceae</taxon>
        <taxon>Rhodococcus</taxon>
        <taxon>Rhodococcus erythropolis group</taxon>
    </lineage>
</organism>
<proteinExistence type="inferred from homology"/>
<keyword id="KW-0028">Amino-acid biosynthesis</keyword>
<keyword id="KW-0963">Cytoplasm</keyword>
<keyword id="KW-0368">Histidine biosynthesis</keyword>
<keyword id="KW-0413">Isomerase</keyword>